<organism>
    <name type="scientific">Brucella melitensis biotype 1 (strain ATCC 23456 / CCUG 17765 / NCTC 10094 / 16M)</name>
    <dbReference type="NCBI Taxonomy" id="224914"/>
    <lineage>
        <taxon>Bacteria</taxon>
        <taxon>Pseudomonadati</taxon>
        <taxon>Pseudomonadota</taxon>
        <taxon>Alphaproteobacteria</taxon>
        <taxon>Hyphomicrobiales</taxon>
        <taxon>Brucellaceae</taxon>
        <taxon>Brucella/Ochrobactrum group</taxon>
        <taxon>Brucella</taxon>
    </lineage>
</organism>
<protein>
    <recommendedName>
        <fullName evidence="1">Small ribosomal subunit protein uS4</fullName>
    </recommendedName>
    <alternativeName>
        <fullName evidence="3">30S ribosomal protein S4</fullName>
    </alternativeName>
</protein>
<gene>
    <name evidence="1" type="primary">rpsD</name>
    <name type="ordered locus">BMEI1133</name>
</gene>
<keyword id="KW-0687">Ribonucleoprotein</keyword>
<keyword id="KW-0689">Ribosomal protein</keyword>
<keyword id="KW-0694">RNA-binding</keyword>
<keyword id="KW-0699">rRNA-binding</keyword>
<reference key="1">
    <citation type="journal article" date="2002" name="Proc. Natl. Acad. Sci. U.S.A.">
        <title>The genome sequence of the facultative intracellular pathogen Brucella melitensis.</title>
        <authorList>
            <person name="DelVecchio V.G."/>
            <person name="Kapatral V."/>
            <person name="Redkar R.J."/>
            <person name="Patra G."/>
            <person name="Mujer C."/>
            <person name="Los T."/>
            <person name="Ivanova N."/>
            <person name="Anderson I."/>
            <person name="Bhattacharyya A."/>
            <person name="Lykidis A."/>
            <person name="Reznik G."/>
            <person name="Jablonski L."/>
            <person name="Larsen N."/>
            <person name="D'Souza M."/>
            <person name="Bernal A."/>
            <person name="Mazur M."/>
            <person name="Goltsman E."/>
            <person name="Selkov E."/>
            <person name="Elzer P.H."/>
            <person name="Hagius S."/>
            <person name="O'Callaghan D."/>
            <person name="Letesson J.-J."/>
            <person name="Haselkorn R."/>
            <person name="Kyrpides N.C."/>
            <person name="Overbeek R."/>
        </authorList>
    </citation>
    <scope>NUCLEOTIDE SEQUENCE [LARGE SCALE GENOMIC DNA]</scope>
    <source>
        <strain>ATCC 23456 / CCUG 17765 / NCTC 10094 / 16M</strain>
    </source>
</reference>
<sequence length="205" mass="23592">MSKRESAKYKIDRRLGENIWGRPKSPVNRREYGPGQHGQRRKGKLSDFGVQLRAKQKLKGFYGDISEKQFRKTYEEAARRKGDTGENLIGLLESRLDAVVYRAKFVPTIFAARQFINHGHVNVNGRRVNIQSYRLKVGDVVEVREKSKQLAIVLEAVQLAERDVPDYIDVDHNKMVATYNRVPGLSDVPYAVQMEPNLVVEFYSR</sequence>
<comment type="function">
    <text evidence="1">One of the primary rRNA binding proteins, it binds directly to 16S rRNA where it nucleates assembly of the body of the 30S subunit.</text>
</comment>
<comment type="function">
    <text evidence="1">With S5 and S12 plays an important role in translational accuracy.</text>
</comment>
<comment type="subunit">
    <text evidence="1">Part of the 30S ribosomal subunit. Contacts protein S5. The interaction surface between S4 and S5 is involved in control of translational fidelity.</text>
</comment>
<comment type="similarity">
    <text evidence="1">Belongs to the universal ribosomal protein uS4 family.</text>
</comment>
<proteinExistence type="inferred from homology"/>
<name>RS4_BRUME</name>
<dbReference type="EMBL" id="AE008917">
    <property type="protein sequence ID" value="AAL52314.1"/>
    <property type="molecule type" value="Genomic_DNA"/>
</dbReference>
<dbReference type="PIR" id="AG3393">
    <property type="entry name" value="AG3393"/>
</dbReference>
<dbReference type="RefSeq" id="WP_002967582.1">
    <property type="nucleotide sequence ID" value="NZ_GG703778.1"/>
</dbReference>
<dbReference type="SMR" id="Q8YGM5"/>
<dbReference type="GeneID" id="97533867"/>
<dbReference type="KEGG" id="bme:BMEI1133"/>
<dbReference type="KEGG" id="bmel:DK63_280"/>
<dbReference type="PATRIC" id="fig|224914.52.peg.289"/>
<dbReference type="eggNOG" id="COG0522">
    <property type="taxonomic scope" value="Bacteria"/>
</dbReference>
<dbReference type="PhylomeDB" id="Q8YGM5"/>
<dbReference type="Proteomes" id="UP000000419">
    <property type="component" value="Chromosome I"/>
</dbReference>
<dbReference type="GO" id="GO:0015935">
    <property type="term" value="C:small ribosomal subunit"/>
    <property type="evidence" value="ECO:0007669"/>
    <property type="project" value="InterPro"/>
</dbReference>
<dbReference type="GO" id="GO:0019843">
    <property type="term" value="F:rRNA binding"/>
    <property type="evidence" value="ECO:0007669"/>
    <property type="project" value="UniProtKB-UniRule"/>
</dbReference>
<dbReference type="GO" id="GO:0003735">
    <property type="term" value="F:structural constituent of ribosome"/>
    <property type="evidence" value="ECO:0007669"/>
    <property type="project" value="InterPro"/>
</dbReference>
<dbReference type="GO" id="GO:0042274">
    <property type="term" value="P:ribosomal small subunit biogenesis"/>
    <property type="evidence" value="ECO:0007669"/>
    <property type="project" value="TreeGrafter"/>
</dbReference>
<dbReference type="GO" id="GO:0006412">
    <property type="term" value="P:translation"/>
    <property type="evidence" value="ECO:0007669"/>
    <property type="project" value="UniProtKB-UniRule"/>
</dbReference>
<dbReference type="CDD" id="cd00165">
    <property type="entry name" value="S4"/>
    <property type="match status" value="1"/>
</dbReference>
<dbReference type="FunFam" id="3.10.290.10:FF:000001">
    <property type="entry name" value="30S ribosomal protein S4"/>
    <property type="match status" value="1"/>
</dbReference>
<dbReference type="Gene3D" id="1.10.1050.10">
    <property type="entry name" value="Ribosomal Protein S4 Delta 41, Chain A, domain 1"/>
    <property type="match status" value="1"/>
</dbReference>
<dbReference type="Gene3D" id="3.10.290.10">
    <property type="entry name" value="RNA-binding S4 domain"/>
    <property type="match status" value="1"/>
</dbReference>
<dbReference type="HAMAP" id="MF_01306_B">
    <property type="entry name" value="Ribosomal_uS4_B"/>
    <property type="match status" value="1"/>
</dbReference>
<dbReference type="InterPro" id="IPR022801">
    <property type="entry name" value="Ribosomal_uS4"/>
</dbReference>
<dbReference type="InterPro" id="IPR005709">
    <property type="entry name" value="Ribosomal_uS4_bac-type"/>
</dbReference>
<dbReference type="InterPro" id="IPR018079">
    <property type="entry name" value="Ribosomal_uS4_CS"/>
</dbReference>
<dbReference type="InterPro" id="IPR001912">
    <property type="entry name" value="Ribosomal_uS4_N"/>
</dbReference>
<dbReference type="InterPro" id="IPR002942">
    <property type="entry name" value="S4_RNA-bd"/>
</dbReference>
<dbReference type="InterPro" id="IPR036986">
    <property type="entry name" value="S4_RNA-bd_sf"/>
</dbReference>
<dbReference type="NCBIfam" id="NF003717">
    <property type="entry name" value="PRK05327.1"/>
    <property type="match status" value="1"/>
</dbReference>
<dbReference type="NCBIfam" id="TIGR01017">
    <property type="entry name" value="rpsD_bact"/>
    <property type="match status" value="1"/>
</dbReference>
<dbReference type="PANTHER" id="PTHR11831">
    <property type="entry name" value="30S 40S RIBOSOMAL PROTEIN"/>
    <property type="match status" value="1"/>
</dbReference>
<dbReference type="PANTHER" id="PTHR11831:SF4">
    <property type="entry name" value="SMALL RIBOSOMAL SUBUNIT PROTEIN US4M"/>
    <property type="match status" value="1"/>
</dbReference>
<dbReference type="Pfam" id="PF00163">
    <property type="entry name" value="Ribosomal_S4"/>
    <property type="match status" value="1"/>
</dbReference>
<dbReference type="Pfam" id="PF01479">
    <property type="entry name" value="S4"/>
    <property type="match status" value="1"/>
</dbReference>
<dbReference type="SMART" id="SM01390">
    <property type="entry name" value="Ribosomal_S4"/>
    <property type="match status" value="1"/>
</dbReference>
<dbReference type="SMART" id="SM00363">
    <property type="entry name" value="S4"/>
    <property type="match status" value="1"/>
</dbReference>
<dbReference type="SUPFAM" id="SSF55174">
    <property type="entry name" value="Alpha-L RNA-binding motif"/>
    <property type="match status" value="1"/>
</dbReference>
<dbReference type="PROSITE" id="PS00632">
    <property type="entry name" value="RIBOSOMAL_S4"/>
    <property type="match status" value="1"/>
</dbReference>
<dbReference type="PROSITE" id="PS50889">
    <property type="entry name" value="S4"/>
    <property type="match status" value="1"/>
</dbReference>
<feature type="chain" id="PRO_0000132351" description="Small ribosomal subunit protein uS4">
    <location>
        <begin position="1"/>
        <end position="205"/>
    </location>
</feature>
<feature type="domain" description="S4 RNA-binding" evidence="1">
    <location>
        <begin position="94"/>
        <end position="157"/>
    </location>
</feature>
<feature type="region of interest" description="Disordered" evidence="2">
    <location>
        <begin position="19"/>
        <end position="45"/>
    </location>
</feature>
<evidence type="ECO:0000255" key="1">
    <source>
        <dbReference type="HAMAP-Rule" id="MF_01306"/>
    </source>
</evidence>
<evidence type="ECO:0000256" key="2">
    <source>
        <dbReference type="SAM" id="MobiDB-lite"/>
    </source>
</evidence>
<evidence type="ECO:0000305" key="3"/>
<accession>Q8YGM5</accession>